<proteinExistence type="evidence at protein level"/>
<reference key="1">
    <citation type="journal article" date="1997" name="Genomics">
        <title>A novel zinc finger-containing RNA-binding protein conserved from fruitflies to humans.</title>
        <authorList>
            <person name="Jackson F.R."/>
            <person name="Banfi S."/>
            <person name="Guffanti A."/>
            <person name="Rossi E."/>
        </authorList>
    </citation>
    <scope>NUCLEOTIDE SEQUENCE [MRNA] (ISOFORM 1)</scope>
</reference>
<reference key="2">
    <citation type="journal article" date="2005" name="Science">
        <title>The transcriptional landscape of the mammalian genome.</title>
        <authorList>
            <person name="Carninci P."/>
            <person name="Kasukawa T."/>
            <person name="Katayama S."/>
            <person name="Gough J."/>
            <person name="Frith M.C."/>
            <person name="Maeda N."/>
            <person name="Oyama R."/>
            <person name="Ravasi T."/>
            <person name="Lenhard B."/>
            <person name="Wells C."/>
            <person name="Kodzius R."/>
            <person name="Shimokawa K."/>
            <person name="Bajic V.B."/>
            <person name="Brenner S.E."/>
            <person name="Batalov S."/>
            <person name="Forrest A.R."/>
            <person name="Zavolan M."/>
            <person name="Davis M.J."/>
            <person name="Wilming L.G."/>
            <person name="Aidinis V."/>
            <person name="Allen J.E."/>
            <person name="Ambesi-Impiombato A."/>
            <person name="Apweiler R."/>
            <person name="Aturaliya R.N."/>
            <person name="Bailey T.L."/>
            <person name="Bansal M."/>
            <person name="Baxter L."/>
            <person name="Beisel K.W."/>
            <person name="Bersano T."/>
            <person name="Bono H."/>
            <person name="Chalk A.M."/>
            <person name="Chiu K.P."/>
            <person name="Choudhary V."/>
            <person name="Christoffels A."/>
            <person name="Clutterbuck D.R."/>
            <person name="Crowe M.L."/>
            <person name="Dalla E."/>
            <person name="Dalrymple B.P."/>
            <person name="de Bono B."/>
            <person name="Della Gatta G."/>
            <person name="di Bernardo D."/>
            <person name="Down T."/>
            <person name="Engstrom P."/>
            <person name="Fagiolini M."/>
            <person name="Faulkner G."/>
            <person name="Fletcher C.F."/>
            <person name="Fukushima T."/>
            <person name="Furuno M."/>
            <person name="Futaki S."/>
            <person name="Gariboldi M."/>
            <person name="Georgii-Hemming P."/>
            <person name="Gingeras T.R."/>
            <person name="Gojobori T."/>
            <person name="Green R.E."/>
            <person name="Gustincich S."/>
            <person name="Harbers M."/>
            <person name="Hayashi Y."/>
            <person name="Hensch T.K."/>
            <person name="Hirokawa N."/>
            <person name="Hill D."/>
            <person name="Huminiecki L."/>
            <person name="Iacono M."/>
            <person name="Ikeo K."/>
            <person name="Iwama A."/>
            <person name="Ishikawa T."/>
            <person name="Jakt M."/>
            <person name="Kanapin A."/>
            <person name="Katoh M."/>
            <person name="Kawasawa Y."/>
            <person name="Kelso J."/>
            <person name="Kitamura H."/>
            <person name="Kitano H."/>
            <person name="Kollias G."/>
            <person name="Krishnan S.P."/>
            <person name="Kruger A."/>
            <person name="Kummerfeld S.K."/>
            <person name="Kurochkin I.V."/>
            <person name="Lareau L.F."/>
            <person name="Lazarevic D."/>
            <person name="Lipovich L."/>
            <person name="Liu J."/>
            <person name="Liuni S."/>
            <person name="McWilliam S."/>
            <person name="Madan Babu M."/>
            <person name="Madera M."/>
            <person name="Marchionni L."/>
            <person name="Matsuda H."/>
            <person name="Matsuzawa S."/>
            <person name="Miki H."/>
            <person name="Mignone F."/>
            <person name="Miyake S."/>
            <person name="Morris K."/>
            <person name="Mottagui-Tabar S."/>
            <person name="Mulder N."/>
            <person name="Nakano N."/>
            <person name="Nakauchi H."/>
            <person name="Ng P."/>
            <person name="Nilsson R."/>
            <person name="Nishiguchi S."/>
            <person name="Nishikawa S."/>
            <person name="Nori F."/>
            <person name="Ohara O."/>
            <person name="Okazaki Y."/>
            <person name="Orlando V."/>
            <person name="Pang K.C."/>
            <person name="Pavan W.J."/>
            <person name="Pavesi G."/>
            <person name="Pesole G."/>
            <person name="Petrovsky N."/>
            <person name="Piazza S."/>
            <person name="Reed J."/>
            <person name="Reid J.F."/>
            <person name="Ring B.Z."/>
            <person name="Ringwald M."/>
            <person name="Rost B."/>
            <person name="Ruan Y."/>
            <person name="Salzberg S.L."/>
            <person name="Sandelin A."/>
            <person name="Schneider C."/>
            <person name="Schoenbach C."/>
            <person name="Sekiguchi K."/>
            <person name="Semple C.A."/>
            <person name="Seno S."/>
            <person name="Sessa L."/>
            <person name="Sheng Y."/>
            <person name="Shibata Y."/>
            <person name="Shimada H."/>
            <person name="Shimada K."/>
            <person name="Silva D."/>
            <person name="Sinclair B."/>
            <person name="Sperling S."/>
            <person name="Stupka E."/>
            <person name="Sugiura K."/>
            <person name="Sultana R."/>
            <person name="Takenaka Y."/>
            <person name="Taki K."/>
            <person name="Tammoja K."/>
            <person name="Tan S.L."/>
            <person name="Tang S."/>
            <person name="Taylor M.S."/>
            <person name="Tegner J."/>
            <person name="Teichmann S.A."/>
            <person name="Ueda H.R."/>
            <person name="van Nimwegen E."/>
            <person name="Verardo R."/>
            <person name="Wei C.L."/>
            <person name="Yagi K."/>
            <person name="Yamanishi H."/>
            <person name="Zabarovsky E."/>
            <person name="Zhu S."/>
            <person name="Zimmer A."/>
            <person name="Hide W."/>
            <person name="Bult C."/>
            <person name="Grimmond S.M."/>
            <person name="Teasdale R.D."/>
            <person name="Liu E.T."/>
            <person name="Brusic V."/>
            <person name="Quackenbush J."/>
            <person name="Wahlestedt C."/>
            <person name="Mattick J.S."/>
            <person name="Hume D.A."/>
            <person name="Kai C."/>
            <person name="Sasaki D."/>
            <person name="Tomaru Y."/>
            <person name="Fukuda S."/>
            <person name="Kanamori-Katayama M."/>
            <person name="Suzuki M."/>
            <person name="Aoki J."/>
            <person name="Arakawa T."/>
            <person name="Iida J."/>
            <person name="Imamura K."/>
            <person name="Itoh M."/>
            <person name="Kato T."/>
            <person name="Kawaji H."/>
            <person name="Kawagashira N."/>
            <person name="Kawashima T."/>
            <person name="Kojima M."/>
            <person name="Kondo S."/>
            <person name="Konno H."/>
            <person name="Nakano K."/>
            <person name="Ninomiya N."/>
            <person name="Nishio T."/>
            <person name="Okada M."/>
            <person name="Plessy C."/>
            <person name="Shibata K."/>
            <person name="Shiraki T."/>
            <person name="Suzuki S."/>
            <person name="Tagami M."/>
            <person name="Waki K."/>
            <person name="Watahiki A."/>
            <person name="Okamura-Oho Y."/>
            <person name="Suzuki H."/>
            <person name="Kawai J."/>
            <person name="Hayashizaki Y."/>
        </authorList>
    </citation>
    <scope>NUCLEOTIDE SEQUENCE [LARGE SCALE MRNA] (ISOFORMS 1 AND 2)</scope>
    <source>
        <strain>C57BL/6J</strain>
        <tissue>Eye</tissue>
        <tissue>Spinal cord</tissue>
    </source>
</reference>
<reference key="3">
    <citation type="journal article" date="2005" name="Mol. Cell. Biol.">
        <title>Exon selection in alpha-tropomyosin mRNA is regulated by the antagonistic action of RBM4 and PTB.</title>
        <authorList>
            <person name="Lin J.C."/>
            <person name="Tarn W.Y."/>
        </authorList>
    </citation>
    <scope>RNA-BINDING</scope>
</reference>
<reference key="4">
    <citation type="journal article" date="2007" name="Proc. Natl. Acad. Sci. U.S.A.">
        <title>LARK activates posttranscriptional expression of an essential mammalian clock protein, PERIOD1.</title>
        <authorList>
            <person name="Kojima S."/>
            <person name="Matsumoto K."/>
            <person name="Hirose M."/>
            <person name="Shimada M."/>
            <person name="Nagano M."/>
            <person name="Shigeyoshi Y."/>
            <person name="Hoshino S."/>
            <person name="Ui-Tei K."/>
            <person name="Saigo K."/>
            <person name="Green C.B."/>
            <person name="Sakaki Y."/>
            <person name="Tei H."/>
        </authorList>
    </citation>
    <scope>FUNCTION</scope>
    <scope>INDUCTION</scope>
    <scope>TISSUE SPECIFICITY</scope>
</reference>
<reference key="5">
    <citation type="journal article" date="2009" name="J. Biol. Chem.">
        <title>RNA-binding motif protein 4 translocates to cytoplasmic granules and suppresses translation via argonaute2 during muscle cell differentiation.</title>
        <authorList>
            <person name="Lin J.C."/>
            <person name="Tarn W.Y."/>
        </authorList>
    </citation>
    <scope>PHOSPHORYLATION</scope>
    <scope>SUBCELLULAR LOCATION</scope>
    <scope>TISSUE SPECIFICITY</scope>
</reference>
<reference key="6">
    <citation type="journal article" date="2011" name="J. Cell Biol.">
        <title>RBM4 down-regulates PTB and antagonizes its activity in muscle cell-specific alternative splicing.</title>
        <authorList>
            <person name="Lin J.C."/>
            <person name="Tarn W.Y."/>
        </authorList>
    </citation>
    <scope>TISSUE SPECIFICITY</scope>
</reference>
<sequence length="361" mass="40046">MVKLFIGNLPREATEQEIRSLFEQYGKVLECDIIKNYGFVHIEDKTAAEDAIRNLHHYKLHGVNINVEASKNKSKASTKLHVGNISPTCTNQELRAKFEEYGPVIECDIVKDYAFVHMERAEDAVEAIRGLDNTEFQGKRMHVQLSTSRLRTAPGMGDQSGCYRCGKEGHWSKECPIDRSGRVADLTEQYNEQYGAVRTPYTMSYGDSLYYNNTYGALDAYYKRCRAARSYEAVAAAAASAYSNYAEQTLSQLPQVQNTAMASHLTSTSLDPYNRHLLPPSGAAAAAAAAAACTAASTSYYGRDRSPLRRATGPVLTVGEGYGYGHDSELSQASAAARNSLYDMARYEREQYADRARYSAF</sequence>
<evidence type="ECO:0000250" key="1"/>
<evidence type="ECO:0000250" key="2">
    <source>
        <dbReference type="UniProtKB" id="Q9BWF3"/>
    </source>
</evidence>
<evidence type="ECO:0000255" key="3">
    <source>
        <dbReference type="PROSITE-ProRule" id="PRU00047"/>
    </source>
</evidence>
<evidence type="ECO:0000255" key="4">
    <source>
        <dbReference type="PROSITE-ProRule" id="PRU00176"/>
    </source>
</evidence>
<evidence type="ECO:0000269" key="5">
    <source>
    </source>
</evidence>
<evidence type="ECO:0000269" key="6">
    <source>
    </source>
</evidence>
<evidence type="ECO:0000269" key="7">
    <source>
    </source>
</evidence>
<evidence type="ECO:0000303" key="8">
    <source>
    </source>
</evidence>
<evidence type="ECO:0000305" key="9"/>
<comment type="function">
    <text evidence="5">RNA-binding factor involved in multiple aspects of cellular processes like alternative splicing of pre-mRNA and translation regulation. Modulates alternative 5'-splice site and exon selection. Acts as a muscle cell differentiation-promoting factor. Activates exon skipping of the PTB pre-mRNA during muscle cell differentiation. Antagonizes the activity of the splicing factor PTBP1 to modulate muscle cell-specific exon selection of alpha tropomyosin. Binds to intronic pyrimidine-rich sequence of the TPM1 and MAPT pre-mRNAs. Required for the translational activation of PER1 mRNA in response to circadian clock. Binds directly to the 3'-UTR of the PER1 mRNA. Exerts a suppressive activity on Cap-dependent translation via binding to CU-rich responsive elements within the 3'UTR of mRNAs, a process increased under stress conditions or during myocytes differentiation. Recruits EIF4A1 to stimulate IRES-dependent translation initiation in respons to cellular stress. Associates to internal ribosome entry segment (IRES) in target mRNA species under stress conditions. Plays a role for miRNA-guided RNA cleavage and translation suppression by promoting association of AGO2-containing miRNPs with their cognate target mRNAs. Associates with miRNAs during muscle cell differentiation. Binds preferentially to 5'-CGCGCG[GCA]-3' motif in vitro.</text>
</comment>
<comment type="subunit">
    <text evidence="2">Interacts with TNPO3; the interaction mediates nuclear import of the protein and is disrupted by nuclear Ran bound to GTP. Interacts with EIF4G1 and WT1. Interacts with EIF4A1; the interaction is modulated under stress-induced conditions. Interacts with AGO1. Interacts with AGO2; the interaction occurs under both cell proliferation and differentiation conditions and in an RNA- and phosphorylation-independent manner. Interacts with DDX5; the interaction occurs in an RNA-independent manner. Interacts with RBPMS; the interaction allows cooperative assembly of RNA-bound stable cell-specific alternative splicing regulatory complexes.</text>
</comment>
<comment type="subcellular location">
    <subcellularLocation>
        <location evidence="1">Nucleus</location>
    </subcellularLocation>
    <subcellularLocation>
        <location evidence="1">Nucleus</location>
        <location evidence="1">Nucleolus</location>
    </subcellularLocation>
    <subcellularLocation>
        <location evidence="1">Nucleus speckle</location>
    </subcellularLocation>
    <subcellularLocation>
        <location evidence="1">Cytoplasm</location>
    </subcellularLocation>
    <subcellularLocation>
        <location evidence="1">Cytoplasmic granule</location>
    </subcellularLocation>
    <text evidence="1">Undergoes continuous nucleocytoplasmic shuttling. Upon nuclear import colocalizes with SR proteins in nuclear speckles. Arsenite stress-induced phosphorylation increases its subcellular relocalization from the nucleus to the cytoplasm and to cytoplasmic stress granules (SG) via a p38 MAPK signaling pathway. Primarily localized in nucleus and nucleoli under cell growth conditions and accumulated in the cytoplasm and cytoplasm perinuclear granules upon muscle cell differentiation (By similarity).</text>
</comment>
<comment type="alternative products">
    <event type="alternative splicing"/>
    <isoform>
        <id>Q8C7Q4-1</id>
        <name>1</name>
        <sequence type="displayed"/>
    </isoform>
    <isoform>
        <id>Q8C7Q4-2</id>
        <name>2</name>
        <sequence type="described" ref="VSP_013417 VSP_013418"/>
    </isoform>
</comment>
<comment type="tissue specificity">
    <text evidence="5 6 7">Expressed in the suprachiasmatic nucleus (SCN). Expressed in myocytes; expression gradually increases during muscle cell differentiation (at protein level). Expressed in the suprachiasmatic nucleus (SCN).</text>
</comment>
<comment type="induction">
    <text evidence="5">Accumulates according to a circadian rhythm in the SCN.</text>
</comment>
<comment type="PTM">
    <text evidence="1 6">Phosphorylated. Phosphorylated in vitro on Ser-306 by SRPK1. Phosphorylation on Ser-306 is induced upon cell stress signaling, which alters its subcellular localization and may modulate its activity on IRES-mediated mRNA translation (By similarity). Phosphorylated. Phosphorylation on Ser-306 is induced upon cell muscle differentiation.</text>
</comment>
<comment type="miscellaneous">
    <molecule>Isoform 2</molecule>
    <text evidence="9">May be due to an intron retention.</text>
</comment>
<comment type="sequence caution" evidence="9">
    <conflict type="frameshift">
        <sequence resource="EMBL-CDS" id="AAC53171"/>
    </conflict>
</comment>
<feature type="chain" id="PRO_0000081755" description="RNA-binding protein 4">
    <location>
        <begin position="1"/>
        <end position="361"/>
    </location>
</feature>
<feature type="domain" description="RRM 1" evidence="4">
    <location>
        <begin position="2"/>
        <end position="72"/>
    </location>
</feature>
<feature type="domain" description="RRM 2" evidence="4">
    <location>
        <begin position="78"/>
        <end position="148"/>
    </location>
</feature>
<feature type="zinc finger region" description="CCHC-type" evidence="3">
    <location>
        <begin position="160"/>
        <end position="177"/>
    </location>
</feature>
<feature type="region of interest" description="Interaction with TNPO3" evidence="1">
    <location>
        <begin position="196"/>
        <end position="361"/>
    </location>
</feature>
<feature type="modified residue" description="Phosphoserine" evidence="2">
    <location>
        <position position="86"/>
    </location>
</feature>
<feature type="modified residue" description="Phosphoserine" evidence="2">
    <location>
        <position position="306"/>
    </location>
</feature>
<feature type="cross-link" description="Glycyl lysine isopeptide (Lys-Gly) (interchain with G-Cter in SUMO2)" evidence="2">
    <location>
        <position position="79"/>
    </location>
</feature>
<feature type="splice variant" id="VSP_013417" description="In isoform 2." evidence="8">
    <original>KRMHVQLSTSRLRTAPGMGDQSGCYRCGKE</original>
    <variation>ESLFWSAQYKAVRNELVEKRKALGWKDFAG</variation>
    <location>
        <begin position="139"/>
        <end position="168"/>
    </location>
</feature>
<feature type="splice variant" id="VSP_013418" description="In isoform 2." evidence="8">
    <location>
        <begin position="169"/>
        <end position="361"/>
    </location>
</feature>
<feature type="sequence conflict" description="In Ref. 1; AAC53171." evidence="9" ref="1">
    <original>S</original>
    <variation>N</variation>
    <location>
        <position position="243"/>
    </location>
</feature>
<feature type="sequence conflict" description="In Ref. 1; AAC53171." evidence="9" ref="1">
    <original>A</original>
    <variation>AAAAA</variation>
    <location>
        <position position="292"/>
    </location>
</feature>
<feature type="sequence conflict" description="In Ref. 1; AAC53171." evidence="9" ref="1">
    <original>S</original>
    <variation>P</variation>
    <location>
        <position position="299"/>
    </location>
</feature>
<feature type="sequence conflict" description="In Ref. 1; AAC53171." evidence="9" ref="1">
    <original>L</original>
    <variation>P</variation>
    <location>
        <position position="316"/>
    </location>
</feature>
<keyword id="KW-0010">Activator</keyword>
<keyword id="KW-0025">Alternative splicing</keyword>
<keyword id="KW-0963">Cytoplasm</keyword>
<keyword id="KW-0221">Differentiation</keyword>
<keyword id="KW-1017">Isopeptide bond</keyword>
<keyword id="KW-0479">Metal-binding</keyword>
<keyword id="KW-0507">mRNA processing</keyword>
<keyword id="KW-0508">mRNA splicing</keyword>
<keyword id="KW-0539">Nucleus</keyword>
<keyword id="KW-0597">Phosphoprotein</keyword>
<keyword id="KW-1185">Reference proteome</keyword>
<keyword id="KW-0677">Repeat</keyword>
<keyword id="KW-0694">RNA-binding</keyword>
<keyword id="KW-0943">RNA-mediated gene silencing</keyword>
<keyword id="KW-0832">Ubl conjugation</keyword>
<keyword id="KW-0862">Zinc</keyword>
<keyword id="KW-0863">Zinc-finger</keyword>
<accession>Q8C7Q4</accession>
<accession>O08752</accession>
<accession>Q8BN66</accession>
<dbReference type="EMBL" id="U89506">
    <property type="protein sequence ID" value="AAC53171.1"/>
    <property type="status" value="ALT_FRAME"/>
    <property type="molecule type" value="mRNA"/>
</dbReference>
<dbReference type="EMBL" id="AK049659">
    <property type="protein sequence ID" value="BAC33862.1"/>
    <property type="molecule type" value="mRNA"/>
</dbReference>
<dbReference type="EMBL" id="AK087488">
    <property type="protein sequence ID" value="BAC39895.1"/>
    <property type="molecule type" value="mRNA"/>
</dbReference>
<dbReference type="CCDS" id="CCDS29436.1">
    <molecule id="Q8C7Q4-1"/>
</dbReference>
<dbReference type="RefSeq" id="NP_001277051.1">
    <molecule id="Q8C7Q4-1"/>
    <property type="nucleotide sequence ID" value="NM_001290122.1"/>
</dbReference>
<dbReference type="RefSeq" id="NP_001277052.1">
    <molecule id="Q8C7Q4-1"/>
    <property type="nucleotide sequence ID" value="NM_001290123.1"/>
</dbReference>
<dbReference type="RefSeq" id="NP_001277053.1">
    <property type="nucleotide sequence ID" value="NM_001290124.1"/>
</dbReference>
<dbReference type="RefSeq" id="NP_001277054.1">
    <property type="nucleotide sequence ID" value="NM_001290125.1"/>
</dbReference>
<dbReference type="RefSeq" id="NP_033058.2">
    <molecule id="Q8C7Q4-1"/>
    <property type="nucleotide sequence ID" value="NM_009032.3"/>
</dbReference>
<dbReference type="SMR" id="Q8C7Q4"/>
<dbReference type="BioGRID" id="202822">
    <property type="interactions" value="3"/>
</dbReference>
<dbReference type="BioGRID" id="207870">
    <property type="interactions" value="119"/>
</dbReference>
<dbReference type="FunCoup" id="Q8C7Q4">
    <property type="interactions" value="3675"/>
</dbReference>
<dbReference type="IntAct" id="Q8C7Q4">
    <property type="interactions" value="1"/>
</dbReference>
<dbReference type="STRING" id="10090.ENSMUSP00000137345"/>
<dbReference type="iPTMnet" id="Q8C7Q4"/>
<dbReference type="PhosphoSitePlus" id="Q8C7Q4"/>
<dbReference type="jPOST" id="Q8C7Q4"/>
<dbReference type="PaxDb" id="10090-ENSMUSP00000137345"/>
<dbReference type="ProteomicsDB" id="300268">
    <molecule id="Q8C7Q4-1"/>
</dbReference>
<dbReference type="ProteomicsDB" id="300269">
    <molecule id="Q8C7Q4-2"/>
</dbReference>
<dbReference type="Pumba" id="Q8C7Q4"/>
<dbReference type="DNASU" id="19653"/>
<dbReference type="Ensembl" id="ENSMUST00000179189.9">
    <molecule id="Q8C7Q4-1"/>
    <property type="protein sequence ID" value="ENSMUSP00000137174.3"/>
    <property type="gene ID" value="ENSMUSG00000094936.9"/>
</dbReference>
<dbReference type="Ensembl" id="ENSMUST00000180248.8">
    <molecule id="Q8C7Q4-1"/>
    <property type="protein sequence ID" value="ENSMUSP00000137345.2"/>
    <property type="gene ID" value="ENSMUSG00000094936.9"/>
</dbReference>
<dbReference type="GeneID" id="19653"/>
<dbReference type="KEGG" id="mmu:19653"/>
<dbReference type="UCSC" id="uc008gau.1">
    <molecule id="Q8C7Q4-1"/>
    <property type="organism name" value="mouse"/>
</dbReference>
<dbReference type="AGR" id="MGI:1100865"/>
<dbReference type="CTD" id="5936"/>
<dbReference type="MGI" id="MGI:1100865">
    <property type="gene designation" value="Rbm4"/>
</dbReference>
<dbReference type="VEuPathDB" id="HostDB:ENSMUSG00000094936"/>
<dbReference type="eggNOG" id="KOG0109">
    <property type="taxonomic scope" value="Eukaryota"/>
</dbReference>
<dbReference type="GeneTree" id="ENSGT00940000154421"/>
<dbReference type="HOGENOM" id="CLU_045263_0_0_1"/>
<dbReference type="InParanoid" id="Q8C7Q4"/>
<dbReference type="OrthoDB" id="79941at2759"/>
<dbReference type="PhylomeDB" id="Q8C7Q4"/>
<dbReference type="TreeFam" id="TF320661"/>
<dbReference type="BioGRID-ORCS" id="19653">
    <property type="hits" value="3 hits in 45 CRISPR screens"/>
</dbReference>
<dbReference type="PRO" id="PR:Q8C7Q4"/>
<dbReference type="Proteomes" id="UP000000589">
    <property type="component" value="Chromosome 19"/>
</dbReference>
<dbReference type="RNAct" id="Q8C7Q4">
    <property type="molecule type" value="protein"/>
</dbReference>
<dbReference type="Bgee" id="ENSMUSG00000094936">
    <property type="expression patterns" value="Expressed in cortical plate and 215 other cell types or tissues"/>
</dbReference>
<dbReference type="ExpressionAtlas" id="Q8C7Q4">
    <property type="expression patterns" value="baseline and differential"/>
</dbReference>
<dbReference type="GO" id="GO:0005737">
    <property type="term" value="C:cytoplasm"/>
    <property type="evidence" value="ECO:0000314"/>
    <property type="project" value="UniProtKB"/>
</dbReference>
<dbReference type="GO" id="GO:0010494">
    <property type="term" value="C:cytoplasmic stress granule"/>
    <property type="evidence" value="ECO:0000250"/>
    <property type="project" value="UniProtKB"/>
</dbReference>
<dbReference type="GO" id="GO:0005829">
    <property type="term" value="C:cytosol"/>
    <property type="evidence" value="ECO:0007669"/>
    <property type="project" value="Ensembl"/>
</dbReference>
<dbReference type="GO" id="GO:0016607">
    <property type="term" value="C:nuclear speck"/>
    <property type="evidence" value="ECO:0000250"/>
    <property type="project" value="UniProtKB"/>
</dbReference>
<dbReference type="GO" id="GO:0005730">
    <property type="term" value="C:nucleolus"/>
    <property type="evidence" value="ECO:0000314"/>
    <property type="project" value="UniProtKB"/>
</dbReference>
<dbReference type="GO" id="GO:0005654">
    <property type="term" value="C:nucleoplasm"/>
    <property type="evidence" value="ECO:0000250"/>
    <property type="project" value="UniProtKB"/>
</dbReference>
<dbReference type="GO" id="GO:0005634">
    <property type="term" value="C:nucleus"/>
    <property type="evidence" value="ECO:0000314"/>
    <property type="project" value="UniProtKB"/>
</dbReference>
<dbReference type="GO" id="GO:0048471">
    <property type="term" value="C:perinuclear region of cytoplasm"/>
    <property type="evidence" value="ECO:0000314"/>
    <property type="project" value="UniProtKB"/>
</dbReference>
<dbReference type="GO" id="GO:0030332">
    <property type="term" value="F:cyclin binding"/>
    <property type="evidence" value="ECO:0007669"/>
    <property type="project" value="Ensembl"/>
</dbReference>
<dbReference type="GO" id="GO:0035198">
    <property type="term" value="F:miRNA binding"/>
    <property type="evidence" value="ECO:0000250"/>
    <property type="project" value="UniProtKB"/>
</dbReference>
<dbReference type="GO" id="GO:0003730">
    <property type="term" value="F:mRNA 3'-UTR binding"/>
    <property type="evidence" value="ECO:0000314"/>
    <property type="project" value="UniProtKB"/>
</dbReference>
<dbReference type="GO" id="GO:0036002">
    <property type="term" value="F:pre-mRNA binding"/>
    <property type="evidence" value="ECO:0000314"/>
    <property type="project" value="UniProtKB"/>
</dbReference>
<dbReference type="GO" id="GO:0097157">
    <property type="term" value="F:pre-mRNA intronic binding"/>
    <property type="evidence" value="ECO:0000250"/>
    <property type="project" value="UniProtKB"/>
</dbReference>
<dbReference type="GO" id="GO:0097158">
    <property type="term" value="F:pre-mRNA intronic pyrimidine-rich binding"/>
    <property type="evidence" value="ECO:0000250"/>
    <property type="project" value="UniProtKB"/>
</dbReference>
<dbReference type="GO" id="GO:0003723">
    <property type="term" value="F:RNA binding"/>
    <property type="evidence" value="ECO:0000250"/>
    <property type="project" value="UniProtKB"/>
</dbReference>
<dbReference type="GO" id="GO:0008270">
    <property type="term" value="F:zinc ion binding"/>
    <property type="evidence" value="ECO:0007669"/>
    <property type="project" value="UniProtKB-KW"/>
</dbReference>
<dbReference type="GO" id="GO:0002190">
    <property type="term" value="P:cap-independent translational initiation"/>
    <property type="evidence" value="ECO:0000250"/>
    <property type="project" value="UniProtKB"/>
</dbReference>
<dbReference type="GO" id="GO:0032922">
    <property type="term" value="P:circadian regulation of gene expression"/>
    <property type="evidence" value="ECO:0000315"/>
    <property type="project" value="MGI"/>
</dbReference>
<dbReference type="GO" id="GO:0097167">
    <property type="term" value="P:circadian regulation of translation"/>
    <property type="evidence" value="ECO:0000314"/>
    <property type="project" value="UniProtKB"/>
</dbReference>
<dbReference type="GO" id="GO:0035883">
    <property type="term" value="P:enteroendocrine cell differentiation"/>
    <property type="evidence" value="ECO:0000315"/>
    <property type="project" value="MGI"/>
</dbReference>
<dbReference type="GO" id="GO:0043153">
    <property type="term" value="P:entrainment of circadian clock by photoperiod"/>
    <property type="evidence" value="ECO:0000314"/>
    <property type="project" value="UniProtKB"/>
</dbReference>
<dbReference type="GO" id="GO:0042593">
    <property type="term" value="P:glucose homeostasis"/>
    <property type="evidence" value="ECO:0000315"/>
    <property type="project" value="MGI"/>
</dbReference>
<dbReference type="GO" id="GO:0035773">
    <property type="term" value="P:insulin secretion involved in cellular response to glucose stimulus"/>
    <property type="evidence" value="ECO:0000315"/>
    <property type="project" value="MGI"/>
</dbReference>
<dbReference type="GO" id="GO:0002192">
    <property type="term" value="P:IRES-dependent translational initiation of linear mRNA"/>
    <property type="evidence" value="ECO:0000250"/>
    <property type="project" value="UniProtKB"/>
</dbReference>
<dbReference type="GO" id="GO:0035278">
    <property type="term" value="P:miRNA-mediated gene silencing by inhibition of translation"/>
    <property type="evidence" value="ECO:0000250"/>
    <property type="project" value="UniProtKB"/>
</dbReference>
<dbReference type="GO" id="GO:0006397">
    <property type="term" value="P:mRNA processing"/>
    <property type="evidence" value="ECO:0007669"/>
    <property type="project" value="UniProtKB-KW"/>
</dbReference>
<dbReference type="GO" id="GO:0017148">
    <property type="term" value="P:negative regulation of translation"/>
    <property type="evidence" value="ECO:0000250"/>
    <property type="project" value="UniProtKB"/>
</dbReference>
<dbReference type="GO" id="GO:0032055">
    <property type="term" value="P:negative regulation of translation in response to stress"/>
    <property type="evidence" value="ECO:0000250"/>
    <property type="project" value="UniProtKB"/>
</dbReference>
<dbReference type="GO" id="GO:0045947">
    <property type="term" value="P:negative regulation of translational initiation"/>
    <property type="evidence" value="ECO:0000250"/>
    <property type="project" value="UniProtKB"/>
</dbReference>
<dbReference type="GO" id="GO:0031016">
    <property type="term" value="P:pancreas development"/>
    <property type="evidence" value="ECO:0000315"/>
    <property type="project" value="MGI"/>
</dbReference>
<dbReference type="GO" id="GO:0051149">
    <property type="term" value="P:positive regulation of muscle cell differentiation"/>
    <property type="evidence" value="ECO:0000250"/>
    <property type="project" value="UniProtKB"/>
</dbReference>
<dbReference type="GO" id="GO:0045727">
    <property type="term" value="P:positive regulation of translation"/>
    <property type="evidence" value="ECO:0000314"/>
    <property type="project" value="MGI"/>
</dbReference>
<dbReference type="GO" id="GO:0000381">
    <property type="term" value="P:regulation of alternative mRNA splicing, via spliceosome"/>
    <property type="evidence" value="ECO:0000315"/>
    <property type="project" value="MGI"/>
</dbReference>
<dbReference type="GO" id="GO:0010468">
    <property type="term" value="P:regulation of gene expression"/>
    <property type="evidence" value="ECO:0000315"/>
    <property type="project" value="MGI"/>
</dbReference>
<dbReference type="GO" id="GO:0046626">
    <property type="term" value="P:regulation of insulin receptor signaling pathway"/>
    <property type="evidence" value="ECO:0000314"/>
    <property type="project" value="MGI"/>
</dbReference>
<dbReference type="GO" id="GO:0046822">
    <property type="term" value="P:regulation of nucleocytoplasmic transport"/>
    <property type="evidence" value="ECO:0000314"/>
    <property type="project" value="UniProtKB"/>
</dbReference>
<dbReference type="GO" id="GO:0046685">
    <property type="term" value="P:response to arsenic-containing substance"/>
    <property type="evidence" value="ECO:0000250"/>
    <property type="project" value="UniProtKB"/>
</dbReference>
<dbReference type="GO" id="GO:0008380">
    <property type="term" value="P:RNA splicing"/>
    <property type="evidence" value="ECO:0007669"/>
    <property type="project" value="UniProtKB-KW"/>
</dbReference>
<dbReference type="CDD" id="cd12606">
    <property type="entry name" value="RRM1_RBM4"/>
    <property type="match status" value="1"/>
</dbReference>
<dbReference type="CDD" id="cd12607">
    <property type="entry name" value="RRM2_RBM4"/>
    <property type="match status" value="1"/>
</dbReference>
<dbReference type="FunFam" id="3.30.70.330:FF:000058">
    <property type="entry name" value="RNA-binding motif protein 4"/>
    <property type="match status" value="1"/>
</dbReference>
<dbReference type="FunFam" id="3.30.70.330:FF:000085">
    <property type="entry name" value="RNA-binding protein 4 isoform X1"/>
    <property type="match status" value="1"/>
</dbReference>
<dbReference type="FunFam" id="4.10.60.10:FF:000015">
    <property type="entry name" value="RNA-binding protein 4B isoform X1"/>
    <property type="match status" value="1"/>
</dbReference>
<dbReference type="Gene3D" id="3.30.70.330">
    <property type="match status" value="2"/>
</dbReference>
<dbReference type="Gene3D" id="4.10.60.10">
    <property type="entry name" value="Zinc finger, CCHC-type"/>
    <property type="match status" value="1"/>
</dbReference>
<dbReference type="InterPro" id="IPR050502">
    <property type="entry name" value="Euk_RNA-bind_prot"/>
</dbReference>
<dbReference type="InterPro" id="IPR012677">
    <property type="entry name" value="Nucleotide-bd_a/b_plait_sf"/>
</dbReference>
<dbReference type="InterPro" id="IPR035979">
    <property type="entry name" value="RBD_domain_sf"/>
</dbReference>
<dbReference type="InterPro" id="IPR034897">
    <property type="entry name" value="RBM4_RRM1"/>
</dbReference>
<dbReference type="InterPro" id="IPR034898">
    <property type="entry name" value="RBM4_RRM2"/>
</dbReference>
<dbReference type="InterPro" id="IPR000504">
    <property type="entry name" value="RRM_dom"/>
</dbReference>
<dbReference type="InterPro" id="IPR001878">
    <property type="entry name" value="Znf_CCHC"/>
</dbReference>
<dbReference type="PANTHER" id="PTHR48025:SF26">
    <property type="entry name" value="HETEROGENEOUS NUCLEAR RIBONUCLEOPROTEIN M-RELATED"/>
    <property type="match status" value="1"/>
</dbReference>
<dbReference type="PANTHER" id="PTHR48025">
    <property type="entry name" value="OS02G0815200 PROTEIN"/>
    <property type="match status" value="1"/>
</dbReference>
<dbReference type="Pfam" id="PF00076">
    <property type="entry name" value="RRM_1"/>
    <property type="match status" value="2"/>
</dbReference>
<dbReference type="Pfam" id="PF00098">
    <property type="entry name" value="zf-CCHC"/>
    <property type="match status" value="1"/>
</dbReference>
<dbReference type="SMART" id="SM00360">
    <property type="entry name" value="RRM"/>
    <property type="match status" value="2"/>
</dbReference>
<dbReference type="SMART" id="SM00343">
    <property type="entry name" value="ZnF_C2HC"/>
    <property type="match status" value="1"/>
</dbReference>
<dbReference type="SUPFAM" id="SSF54928">
    <property type="entry name" value="RNA-binding domain, RBD"/>
    <property type="match status" value="2"/>
</dbReference>
<dbReference type="PROSITE" id="PS50102">
    <property type="entry name" value="RRM"/>
    <property type="match status" value="2"/>
</dbReference>
<dbReference type="PROSITE" id="PS50158">
    <property type="entry name" value="ZF_CCHC"/>
    <property type="match status" value="1"/>
</dbReference>
<name>RBM4_MOUSE</name>
<organism>
    <name type="scientific">Mus musculus</name>
    <name type="common">Mouse</name>
    <dbReference type="NCBI Taxonomy" id="10090"/>
    <lineage>
        <taxon>Eukaryota</taxon>
        <taxon>Metazoa</taxon>
        <taxon>Chordata</taxon>
        <taxon>Craniata</taxon>
        <taxon>Vertebrata</taxon>
        <taxon>Euteleostomi</taxon>
        <taxon>Mammalia</taxon>
        <taxon>Eutheria</taxon>
        <taxon>Euarchontoglires</taxon>
        <taxon>Glires</taxon>
        <taxon>Rodentia</taxon>
        <taxon>Myomorpha</taxon>
        <taxon>Muroidea</taxon>
        <taxon>Muridae</taxon>
        <taxon>Murinae</taxon>
        <taxon>Mus</taxon>
        <taxon>Mus</taxon>
    </lineage>
</organism>
<gene>
    <name type="primary">Rbm4</name>
    <name type="synonym">Rbm4a</name>
</gene>
<protein>
    <recommendedName>
        <fullName>RNA-binding protein 4</fullName>
    </recommendedName>
    <alternativeName>
        <fullName>Lark homolog</fullName>
        <shortName>mLark</shortName>
    </alternativeName>
    <alternativeName>
        <fullName>RNA-binding motif protein 4</fullName>
    </alternativeName>
    <alternativeName>
        <fullName>RNA-binding motif protein 4a</fullName>
    </alternativeName>
</protein>